<name>MIAB_SALNS</name>
<comment type="function">
    <text evidence="1">Catalyzes the methylthiolation of N6-(dimethylallyl)adenosine (i(6)A), leading to the formation of 2-methylthio-N6-(dimethylallyl)adenosine (ms(2)i(6)A) at position 37 in tRNAs that read codons beginning with uridine.</text>
</comment>
<comment type="catalytic activity">
    <reaction evidence="1">
        <text>N(6)-dimethylallyladenosine(37) in tRNA + (sulfur carrier)-SH + AH2 + 2 S-adenosyl-L-methionine = 2-methylsulfanyl-N(6)-dimethylallyladenosine(37) in tRNA + (sulfur carrier)-H + 5'-deoxyadenosine + L-methionine + A + S-adenosyl-L-homocysteine + 2 H(+)</text>
        <dbReference type="Rhea" id="RHEA:37067"/>
        <dbReference type="Rhea" id="RHEA-COMP:10375"/>
        <dbReference type="Rhea" id="RHEA-COMP:10376"/>
        <dbReference type="Rhea" id="RHEA-COMP:14737"/>
        <dbReference type="Rhea" id="RHEA-COMP:14739"/>
        <dbReference type="ChEBI" id="CHEBI:13193"/>
        <dbReference type="ChEBI" id="CHEBI:15378"/>
        <dbReference type="ChEBI" id="CHEBI:17319"/>
        <dbReference type="ChEBI" id="CHEBI:17499"/>
        <dbReference type="ChEBI" id="CHEBI:29917"/>
        <dbReference type="ChEBI" id="CHEBI:57844"/>
        <dbReference type="ChEBI" id="CHEBI:57856"/>
        <dbReference type="ChEBI" id="CHEBI:59789"/>
        <dbReference type="ChEBI" id="CHEBI:64428"/>
        <dbReference type="ChEBI" id="CHEBI:74415"/>
        <dbReference type="ChEBI" id="CHEBI:74417"/>
        <dbReference type="EC" id="2.8.4.3"/>
    </reaction>
</comment>
<comment type="cofactor">
    <cofactor evidence="1">
        <name>[4Fe-4S] cluster</name>
        <dbReference type="ChEBI" id="CHEBI:49883"/>
    </cofactor>
    <text evidence="1">Binds 2 [4Fe-4S] clusters. One cluster is coordinated with 3 cysteines and an exchangeable S-adenosyl-L-methionine.</text>
</comment>
<comment type="subunit">
    <text evidence="1">Monomer.</text>
</comment>
<comment type="subcellular location">
    <subcellularLocation>
        <location evidence="1">Cytoplasm</location>
    </subcellularLocation>
</comment>
<comment type="similarity">
    <text evidence="1">Belongs to the methylthiotransferase family. MiaB subfamily.</text>
</comment>
<keyword id="KW-0004">4Fe-4S</keyword>
<keyword id="KW-0963">Cytoplasm</keyword>
<keyword id="KW-0408">Iron</keyword>
<keyword id="KW-0411">Iron-sulfur</keyword>
<keyword id="KW-0479">Metal-binding</keyword>
<keyword id="KW-0949">S-adenosyl-L-methionine</keyword>
<keyword id="KW-0808">Transferase</keyword>
<keyword id="KW-0819">tRNA processing</keyword>
<evidence type="ECO:0000255" key="1">
    <source>
        <dbReference type="HAMAP-Rule" id="MF_01864"/>
    </source>
</evidence>
<evidence type="ECO:0000255" key="2">
    <source>
        <dbReference type="PROSITE-ProRule" id="PRU01266"/>
    </source>
</evidence>
<dbReference type="EC" id="2.8.4.3" evidence="1"/>
<dbReference type="EMBL" id="CP001113">
    <property type="protein sequence ID" value="ACF65638.1"/>
    <property type="molecule type" value="Genomic_DNA"/>
</dbReference>
<dbReference type="RefSeq" id="WP_001519200.1">
    <property type="nucleotide sequence ID" value="NZ_CCMR01000003.1"/>
</dbReference>
<dbReference type="SMR" id="B4SYN0"/>
<dbReference type="KEGG" id="see:SNSL254_A0729"/>
<dbReference type="HOGENOM" id="CLU_018697_2_0_6"/>
<dbReference type="Proteomes" id="UP000008824">
    <property type="component" value="Chromosome"/>
</dbReference>
<dbReference type="GO" id="GO:0005829">
    <property type="term" value="C:cytosol"/>
    <property type="evidence" value="ECO:0007669"/>
    <property type="project" value="TreeGrafter"/>
</dbReference>
<dbReference type="GO" id="GO:0051539">
    <property type="term" value="F:4 iron, 4 sulfur cluster binding"/>
    <property type="evidence" value="ECO:0007669"/>
    <property type="project" value="UniProtKB-UniRule"/>
</dbReference>
<dbReference type="GO" id="GO:0046872">
    <property type="term" value="F:metal ion binding"/>
    <property type="evidence" value="ECO:0007669"/>
    <property type="project" value="UniProtKB-KW"/>
</dbReference>
<dbReference type="GO" id="GO:0035597">
    <property type="term" value="F:N6-isopentenyladenosine methylthiotransferase activity"/>
    <property type="evidence" value="ECO:0007669"/>
    <property type="project" value="TreeGrafter"/>
</dbReference>
<dbReference type="CDD" id="cd01335">
    <property type="entry name" value="Radical_SAM"/>
    <property type="match status" value="1"/>
</dbReference>
<dbReference type="FunFam" id="3.40.50.12160:FF:000001">
    <property type="entry name" value="tRNA-2-methylthio-N(6)-dimethylallyladenosine synthase"/>
    <property type="match status" value="1"/>
</dbReference>
<dbReference type="FunFam" id="3.80.30.20:FF:000001">
    <property type="entry name" value="tRNA-2-methylthio-N(6)-dimethylallyladenosine synthase 2"/>
    <property type="match status" value="1"/>
</dbReference>
<dbReference type="Gene3D" id="3.40.50.12160">
    <property type="entry name" value="Methylthiotransferase, N-terminal domain"/>
    <property type="match status" value="1"/>
</dbReference>
<dbReference type="Gene3D" id="3.80.30.20">
    <property type="entry name" value="tm_1862 like domain"/>
    <property type="match status" value="1"/>
</dbReference>
<dbReference type="HAMAP" id="MF_01864">
    <property type="entry name" value="tRNA_metthiotr_MiaB"/>
    <property type="match status" value="1"/>
</dbReference>
<dbReference type="InterPro" id="IPR006638">
    <property type="entry name" value="Elp3/MiaA/NifB-like_rSAM"/>
</dbReference>
<dbReference type="InterPro" id="IPR005839">
    <property type="entry name" value="Methylthiotransferase"/>
</dbReference>
<dbReference type="InterPro" id="IPR020612">
    <property type="entry name" value="Methylthiotransferase_CS"/>
</dbReference>
<dbReference type="InterPro" id="IPR013848">
    <property type="entry name" value="Methylthiotransferase_N"/>
</dbReference>
<dbReference type="InterPro" id="IPR038135">
    <property type="entry name" value="Methylthiotransferase_N_sf"/>
</dbReference>
<dbReference type="InterPro" id="IPR006463">
    <property type="entry name" value="MiaB_methiolase"/>
</dbReference>
<dbReference type="InterPro" id="IPR007197">
    <property type="entry name" value="rSAM"/>
</dbReference>
<dbReference type="InterPro" id="IPR023404">
    <property type="entry name" value="rSAM_horseshoe"/>
</dbReference>
<dbReference type="InterPro" id="IPR002792">
    <property type="entry name" value="TRAM_dom"/>
</dbReference>
<dbReference type="NCBIfam" id="TIGR01574">
    <property type="entry name" value="miaB-methiolase"/>
    <property type="match status" value="1"/>
</dbReference>
<dbReference type="NCBIfam" id="TIGR00089">
    <property type="entry name" value="MiaB/RimO family radical SAM methylthiotransferase"/>
    <property type="match status" value="1"/>
</dbReference>
<dbReference type="PANTHER" id="PTHR43020">
    <property type="entry name" value="CDK5 REGULATORY SUBUNIT-ASSOCIATED PROTEIN 1"/>
    <property type="match status" value="1"/>
</dbReference>
<dbReference type="PANTHER" id="PTHR43020:SF2">
    <property type="entry name" value="MITOCHONDRIAL TRNA METHYLTHIOTRANSFERASE CDK5RAP1"/>
    <property type="match status" value="1"/>
</dbReference>
<dbReference type="Pfam" id="PF04055">
    <property type="entry name" value="Radical_SAM"/>
    <property type="match status" value="1"/>
</dbReference>
<dbReference type="Pfam" id="PF01938">
    <property type="entry name" value="TRAM"/>
    <property type="match status" value="1"/>
</dbReference>
<dbReference type="Pfam" id="PF00919">
    <property type="entry name" value="UPF0004"/>
    <property type="match status" value="1"/>
</dbReference>
<dbReference type="SFLD" id="SFLDF00273">
    <property type="entry name" value="(dimethylallyl)adenosine_tRNA"/>
    <property type="match status" value="1"/>
</dbReference>
<dbReference type="SFLD" id="SFLDG01082">
    <property type="entry name" value="B12-binding_domain_containing"/>
    <property type="match status" value="1"/>
</dbReference>
<dbReference type="SFLD" id="SFLDS00029">
    <property type="entry name" value="Radical_SAM"/>
    <property type="match status" value="1"/>
</dbReference>
<dbReference type="SMART" id="SM00729">
    <property type="entry name" value="Elp3"/>
    <property type="match status" value="1"/>
</dbReference>
<dbReference type="SUPFAM" id="SSF102114">
    <property type="entry name" value="Radical SAM enzymes"/>
    <property type="match status" value="1"/>
</dbReference>
<dbReference type="PROSITE" id="PS51449">
    <property type="entry name" value="MTTASE_N"/>
    <property type="match status" value="1"/>
</dbReference>
<dbReference type="PROSITE" id="PS01278">
    <property type="entry name" value="MTTASE_RADICAL"/>
    <property type="match status" value="1"/>
</dbReference>
<dbReference type="PROSITE" id="PS51918">
    <property type="entry name" value="RADICAL_SAM"/>
    <property type="match status" value="1"/>
</dbReference>
<dbReference type="PROSITE" id="PS50926">
    <property type="entry name" value="TRAM"/>
    <property type="match status" value="1"/>
</dbReference>
<gene>
    <name evidence="1" type="primary">miaB</name>
    <name type="ordered locus">SNSL254_A0729</name>
</gene>
<feature type="chain" id="PRO_0000374526" description="tRNA-2-methylthio-N(6)-dimethylallyladenosine synthase">
    <location>
        <begin position="1"/>
        <end position="474"/>
    </location>
</feature>
<feature type="domain" description="MTTase N-terminal" evidence="1">
    <location>
        <begin position="3"/>
        <end position="120"/>
    </location>
</feature>
<feature type="domain" description="Radical SAM core" evidence="2">
    <location>
        <begin position="143"/>
        <end position="375"/>
    </location>
</feature>
<feature type="domain" description="TRAM" evidence="1">
    <location>
        <begin position="378"/>
        <end position="441"/>
    </location>
</feature>
<feature type="binding site" evidence="1">
    <location>
        <position position="12"/>
    </location>
    <ligand>
        <name>[4Fe-4S] cluster</name>
        <dbReference type="ChEBI" id="CHEBI:49883"/>
        <label>1</label>
    </ligand>
</feature>
<feature type="binding site" evidence="1">
    <location>
        <position position="49"/>
    </location>
    <ligand>
        <name>[4Fe-4S] cluster</name>
        <dbReference type="ChEBI" id="CHEBI:49883"/>
        <label>1</label>
    </ligand>
</feature>
<feature type="binding site" evidence="1">
    <location>
        <position position="83"/>
    </location>
    <ligand>
        <name>[4Fe-4S] cluster</name>
        <dbReference type="ChEBI" id="CHEBI:49883"/>
        <label>1</label>
    </ligand>
</feature>
<feature type="binding site" evidence="1">
    <location>
        <position position="157"/>
    </location>
    <ligand>
        <name>[4Fe-4S] cluster</name>
        <dbReference type="ChEBI" id="CHEBI:49883"/>
        <label>2</label>
        <note>4Fe-4S-S-AdoMet</note>
    </ligand>
</feature>
<feature type="binding site" evidence="1">
    <location>
        <position position="161"/>
    </location>
    <ligand>
        <name>[4Fe-4S] cluster</name>
        <dbReference type="ChEBI" id="CHEBI:49883"/>
        <label>2</label>
        <note>4Fe-4S-S-AdoMet</note>
    </ligand>
</feature>
<feature type="binding site" evidence="1">
    <location>
        <position position="164"/>
    </location>
    <ligand>
        <name>[4Fe-4S] cluster</name>
        <dbReference type="ChEBI" id="CHEBI:49883"/>
        <label>2</label>
        <note>4Fe-4S-S-AdoMet</note>
    </ligand>
</feature>
<proteinExistence type="inferred from homology"/>
<organism>
    <name type="scientific">Salmonella newport (strain SL254)</name>
    <dbReference type="NCBI Taxonomy" id="423368"/>
    <lineage>
        <taxon>Bacteria</taxon>
        <taxon>Pseudomonadati</taxon>
        <taxon>Pseudomonadota</taxon>
        <taxon>Gammaproteobacteria</taxon>
        <taxon>Enterobacterales</taxon>
        <taxon>Enterobacteriaceae</taxon>
        <taxon>Salmonella</taxon>
    </lineage>
</organism>
<accession>B4SYN0</accession>
<sequence>MTKKLHIKTWGCQMNEYDSSKMADLLDATHGYQLTDVAEEADVLLLNTCSIREKAQEKVFHQLGRWRLLKEKNPDLIIGVGGCVASQEGEHIRQRAHYVDIIFGPQTLHRLPEMINSVRGDRSPVVDISFPEIEKFDRLPEPRAEGPTAFVSIMEGCNKYCTYCVVPYTRGEEVSRPSDDILFEIAQLAAQGVREVNLLGQNVNAWRGENYDGTTGTFADLLRLVAAIDGIDRIRFTTSHPIEFTDDIIEVYRDTPELVSFLHLPVQSGSDRVLNLMGRTHTALEYKAIIRKLRAARPDIQISSDFIVGFPGETTDDFEKTMKLIADVNFDMSYSFIFSARPGTPAADMVDDVPEEEKKQRLYILQERINQQAMAWSRRMLGTTQRILVEGTSRKNIMELSGRTENNRVVNFEGTPEMIGKFVDVEITDVYPNSLRGKVVRTEDEMGLRVAETPESVIARTRKENELGVGFYQP</sequence>
<protein>
    <recommendedName>
        <fullName evidence="1">tRNA-2-methylthio-N(6)-dimethylallyladenosine synthase</fullName>
        <ecNumber evidence="1">2.8.4.3</ecNumber>
    </recommendedName>
    <alternativeName>
        <fullName evidence="1">(Dimethylallyl)adenosine tRNA methylthiotransferase MiaB</fullName>
    </alternativeName>
    <alternativeName>
        <fullName evidence="1">tRNA-i(6)A37 methylthiotransferase</fullName>
    </alternativeName>
</protein>
<reference key="1">
    <citation type="journal article" date="2011" name="J. Bacteriol.">
        <title>Comparative genomics of 28 Salmonella enterica isolates: evidence for CRISPR-mediated adaptive sublineage evolution.</title>
        <authorList>
            <person name="Fricke W.F."/>
            <person name="Mammel M.K."/>
            <person name="McDermott P.F."/>
            <person name="Tartera C."/>
            <person name="White D.G."/>
            <person name="Leclerc J.E."/>
            <person name="Ravel J."/>
            <person name="Cebula T.A."/>
        </authorList>
    </citation>
    <scope>NUCLEOTIDE SEQUENCE [LARGE SCALE GENOMIC DNA]</scope>
    <source>
        <strain>SL254</strain>
    </source>
</reference>